<proteinExistence type="inferred from homology"/>
<evidence type="ECO:0000305" key="1"/>
<accession>Q04769</accession>
<keyword id="KW-1185">Reference proteome</keyword>
<name>YG35_BPLLH</name>
<protein>
    <recommendedName>
        <fullName>Uncharacterized protein ORF5</fullName>
    </recommendedName>
    <alternativeName>
        <fullName>ORF118</fullName>
    </alternativeName>
</protein>
<organismHost>
    <name type="scientific">Lactobacillus delbrueckii</name>
    <dbReference type="NCBI Taxonomy" id="1584"/>
</organismHost>
<dbReference type="EMBL" id="EF455602">
    <property type="protein sequence ID" value="AAC00537.1"/>
    <property type="molecule type" value="Genomic_DNA"/>
</dbReference>
<dbReference type="PIR" id="E45691">
    <property type="entry name" value="E45691"/>
</dbReference>
<dbReference type="RefSeq" id="YP_001285885.1">
    <property type="nucleotide sequence ID" value="NC_009554.1"/>
</dbReference>
<dbReference type="GeneID" id="5220385"/>
<dbReference type="KEGG" id="vg:5220385"/>
<dbReference type="OrthoDB" id="31852at10239"/>
<dbReference type="Proteomes" id="UP000001922">
    <property type="component" value="Genome"/>
</dbReference>
<dbReference type="InterPro" id="IPR019612">
    <property type="entry name" value="Minor_capsid_put"/>
</dbReference>
<dbReference type="Pfam" id="PF10665">
    <property type="entry name" value="Minor_capsid_1"/>
    <property type="match status" value="1"/>
</dbReference>
<feature type="chain" id="PRO_0000066225" description="Uncharacterized protein ORF5">
    <location>
        <begin position="1"/>
        <end position="118"/>
    </location>
</feature>
<sequence>MKLPIPYQMAVSTVHLKLTDQSAKKDRYGRTVPTWEGDITKCVVNMQTTYSGTNNDRQIVANGLIVMYAGYSNPIPTLTKENLGSKLTYQGLDYTVTSLNRFDQPGTEDLYCYELEVI</sequence>
<comment type="similarity">
    <text evidence="1">Belongs to the Lactobacillus delbrueckii bacteriophages ORF5 protein family.</text>
</comment>
<reference key="1">
    <citation type="journal article" date="1993" name="J. Virol.">
        <title>Molecular comparison of the structural proteins encoding gene clusters of two related Lactobacillus delbrueckii bacteriophages.</title>
        <authorList>
            <person name="Vasala A."/>
            <person name="Dupont L."/>
            <person name="Baumann M."/>
            <person name="Ritzenthaler P."/>
            <person name="Alatossava T."/>
        </authorList>
    </citation>
    <scope>NUCLEOTIDE SEQUENCE [GENOMIC DNA]</scope>
</reference>
<reference key="2">
    <citation type="journal article" date="1994" name="Gene">
        <title>Characterization of the genome region encoding structural proteins of Lactobacillus delbrueckii subsp. lactis bacteriophage LL-H.</title>
        <authorList>
            <person name="Mikkonen M."/>
            <person name="Alatossava T."/>
        </authorList>
    </citation>
    <scope>NUCLEOTIDE SEQUENCE [GENOMIC DNA]</scope>
</reference>
<organism>
    <name type="scientific">Lactococcus phage LL-H</name>
    <name type="common">Lactococcus delbrueckii bacteriophage LL-H</name>
    <dbReference type="NCBI Taxonomy" id="12348"/>
    <lineage>
        <taxon>Viruses</taxon>
        <taxon>Duplodnaviria</taxon>
        <taxon>Heunggongvirae</taxon>
        <taxon>Uroviricota</taxon>
        <taxon>Caudoviricetes</taxon>
    </lineage>
</organism>